<gene>
    <name evidence="1" type="primary">dxr</name>
    <name type="ordered locus">Cgl2016</name>
    <name type="ordered locus">cg2208</name>
</gene>
<reference key="1">
    <citation type="journal article" date="2003" name="Appl. Microbiol. Biotechnol.">
        <title>The Corynebacterium glutamicum genome: features and impacts on biotechnological processes.</title>
        <authorList>
            <person name="Ikeda M."/>
            <person name="Nakagawa S."/>
        </authorList>
    </citation>
    <scope>NUCLEOTIDE SEQUENCE [LARGE SCALE GENOMIC DNA]</scope>
    <source>
        <strain>ATCC 13032 / DSM 20300 / JCM 1318 / BCRC 11384 / CCUG 27702 / LMG 3730 / NBRC 12168 / NCIMB 10025 / NRRL B-2784 / 534</strain>
    </source>
</reference>
<reference key="2">
    <citation type="journal article" date="2003" name="J. Biotechnol.">
        <title>The complete Corynebacterium glutamicum ATCC 13032 genome sequence and its impact on the production of L-aspartate-derived amino acids and vitamins.</title>
        <authorList>
            <person name="Kalinowski J."/>
            <person name="Bathe B."/>
            <person name="Bartels D."/>
            <person name="Bischoff N."/>
            <person name="Bott M."/>
            <person name="Burkovski A."/>
            <person name="Dusch N."/>
            <person name="Eggeling L."/>
            <person name="Eikmanns B.J."/>
            <person name="Gaigalat L."/>
            <person name="Goesmann A."/>
            <person name="Hartmann M."/>
            <person name="Huthmacher K."/>
            <person name="Kraemer R."/>
            <person name="Linke B."/>
            <person name="McHardy A.C."/>
            <person name="Meyer F."/>
            <person name="Moeckel B."/>
            <person name="Pfefferle W."/>
            <person name="Puehler A."/>
            <person name="Rey D.A."/>
            <person name="Rueckert C."/>
            <person name="Rupp O."/>
            <person name="Sahm H."/>
            <person name="Wendisch V.F."/>
            <person name="Wiegraebe I."/>
            <person name="Tauch A."/>
        </authorList>
    </citation>
    <scope>NUCLEOTIDE SEQUENCE [LARGE SCALE GENOMIC DNA]</scope>
    <source>
        <strain>ATCC 13032 / DSM 20300 / JCM 1318 / BCRC 11384 / CCUG 27702 / LMG 3730 / NBRC 12168 / NCIMB 10025 / NRRL B-2784 / 534</strain>
    </source>
</reference>
<protein>
    <recommendedName>
        <fullName evidence="1">1-deoxy-D-xylulose 5-phosphate reductoisomerase</fullName>
        <shortName evidence="1">DXP reductoisomerase</shortName>
        <ecNumber evidence="1">1.1.1.267</ecNumber>
    </recommendedName>
    <alternativeName>
        <fullName evidence="1">1-deoxyxylulose-5-phosphate reductoisomerase</fullName>
    </alternativeName>
    <alternativeName>
        <fullName evidence="1">2-C-methyl-D-erythritol 4-phosphate synthase</fullName>
    </alternativeName>
</protein>
<keyword id="KW-0414">Isoprene biosynthesis</keyword>
<keyword id="KW-0464">Manganese</keyword>
<keyword id="KW-0479">Metal-binding</keyword>
<keyword id="KW-0521">NADP</keyword>
<keyword id="KW-0560">Oxidoreductase</keyword>
<keyword id="KW-1185">Reference proteome</keyword>
<name>DXR_CORGL</name>
<accession>Q8NP10</accession>
<evidence type="ECO:0000255" key="1">
    <source>
        <dbReference type="HAMAP-Rule" id="MF_00183"/>
    </source>
</evidence>
<dbReference type="EC" id="1.1.1.267" evidence="1"/>
<dbReference type="EMBL" id="BA000036">
    <property type="protein sequence ID" value="BAB99409.1"/>
    <property type="molecule type" value="Genomic_DNA"/>
</dbReference>
<dbReference type="EMBL" id="BX927154">
    <property type="protein sequence ID" value="CAF20356.1"/>
    <property type="molecule type" value="Genomic_DNA"/>
</dbReference>
<dbReference type="RefSeq" id="NP_601221.1">
    <property type="nucleotide sequence ID" value="NC_003450.3"/>
</dbReference>
<dbReference type="RefSeq" id="WP_011014825.1">
    <property type="nucleotide sequence ID" value="NC_006958.1"/>
</dbReference>
<dbReference type="SMR" id="Q8NP10"/>
<dbReference type="STRING" id="196627.cg2208"/>
<dbReference type="GeneID" id="1019972"/>
<dbReference type="KEGG" id="cgb:cg2208"/>
<dbReference type="KEGG" id="cgl:Cgl2016"/>
<dbReference type="PATRIC" id="fig|196627.13.peg.1954"/>
<dbReference type="eggNOG" id="COG0743">
    <property type="taxonomic scope" value="Bacteria"/>
</dbReference>
<dbReference type="HOGENOM" id="CLU_035714_4_0_11"/>
<dbReference type="OrthoDB" id="9806546at2"/>
<dbReference type="BioCyc" id="CORYNE:G18NG-11608-MONOMER"/>
<dbReference type="UniPathway" id="UPA00056">
    <property type="reaction ID" value="UER00092"/>
</dbReference>
<dbReference type="Proteomes" id="UP000000582">
    <property type="component" value="Chromosome"/>
</dbReference>
<dbReference type="Proteomes" id="UP000001009">
    <property type="component" value="Chromosome"/>
</dbReference>
<dbReference type="GO" id="GO:0030604">
    <property type="term" value="F:1-deoxy-D-xylulose-5-phosphate reductoisomerase activity"/>
    <property type="evidence" value="ECO:0007669"/>
    <property type="project" value="UniProtKB-UniRule"/>
</dbReference>
<dbReference type="GO" id="GO:0030145">
    <property type="term" value="F:manganese ion binding"/>
    <property type="evidence" value="ECO:0007669"/>
    <property type="project" value="TreeGrafter"/>
</dbReference>
<dbReference type="GO" id="GO:0070402">
    <property type="term" value="F:NADPH binding"/>
    <property type="evidence" value="ECO:0007669"/>
    <property type="project" value="InterPro"/>
</dbReference>
<dbReference type="GO" id="GO:0051484">
    <property type="term" value="P:isopentenyl diphosphate biosynthetic process, methylerythritol 4-phosphate pathway involved in terpenoid biosynthetic process"/>
    <property type="evidence" value="ECO:0007669"/>
    <property type="project" value="TreeGrafter"/>
</dbReference>
<dbReference type="FunFam" id="3.40.50.720:FF:000045">
    <property type="entry name" value="1-deoxy-D-xylulose 5-phosphate reductoisomerase"/>
    <property type="match status" value="1"/>
</dbReference>
<dbReference type="Gene3D" id="1.10.1740.10">
    <property type="match status" value="1"/>
</dbReference>
<dbReference type="Gene3D" id="3.40.50.720">
    <property type="entry name" value="NAD(P)-binding Rossmann-like Domain"/>
    <property type="match status" value="1"/>
</dbReference>
<dbReference type="HAMAP" id="MF_00183">
    <property type="entry name" value="DXP_reductoisom"/>
    <property type="match status" value="1"/>
</dbReference>
<dbReference type="InterPro" id="IPR003821">
    <property type="entry name" value="DXP_reductoisomerase"/>
</dbReference>
<dbReference type="InterPro" id="IPR013644">
    <property type="entry name" value="DXP_reductoisomerase_C"/>
</dbReference>
<dbReference type="InterPro" id="IPR013512">
    <property type="entry name" value="DXP_reductoisomerase_N"/>
</dbReference>
<dbReference type="InterPro" id="IPR026877">
    <property type="entry name" value="DXPR_C"/>
</dbReference>
<dbReference type="InterPro" id="IPR036169">
    <property type="entry name" value="DXPR_C_sf"/>
</dbReference>
<dbReference type="InterPro" id="IPR036291">
    <property type="entry name" value="NAD(P)-bd_dom_sf"/>
</dbReference>
<dbReference type="NCBIfam" id="TIGR00243">
    <property type="entry name" value="Dxr"/>
    <property type="match status" value="1"/>
</dbReference>
<dbReference type="PANTHER" id="PTHR30525">
    <property type="entry name" value="1-DEOXY-D-XYLULOSE 5-PHOSPHATE REDUCTOISOMERASE"/>
    <property type="match status" value="1"/>
</dbReference>
<dbReference type="PANTHER" id="PTHR30525:SF0">
    <property type="entry name" value="1-DEOXY-D-XYLULOSE 5-PHOSPHATE REDUCTOISOMERASE, CHLOROPLASTIC"/>
    <property type="match status" value="1"/>
</dbReference>
<dbReference type="Pfam" id="PF08436">
    <property type="entry name" value="DXP_redisom_C"/>
    <property type="match status" value="1"/>
</dbReference>
<dbReference type="Pfam" id="PF02670">
    <property type="entry name" value="DXP_reductoisom"/>
    <property type="match status" value="1"/>
</dbReference>
<dbReference type="Pfam" id="PF13288">
    <property type="entry name" value="DXPR_C"/>
    <property type="match status" value="1"/>
</dbReference>
<dbReference type="PIRSF" id="PIRSF006205">
    <property type="entry name" value="Dxp_reductismrs"/>
    <property type="match status" value="1"/>
</dbReference>
<dbReference type="SUPFAM" id="SSF69055">
    <property type="entry name" value="1-deoxy-D-xylulose-5-phosphate reductoisomerase, C-terminal domain"/>
    <property type="match status" value="1"/>
</dbReference>
<dbReference type="SUPFAM" id="SSF55347">
    <property type="entry name" value="Glyceraldehyde-3-phosphate dehydrogenase-like, C-terminal domain"/>
    <property type="match status" value="1"/>
</dbReference>
<dbReference type="SUPFAM" id="SSF51735">
    <property type="entry name" value="NAD(P)-binding Rossmann-fold domains"/>
    <property type="match status" value="1"/>
</dbReference>
<proteinExistence type="inferred from homology"/>
<comment type="function">
    <text evidence="1">Catalyzes the NADPH-dependent rearrangement and reduction of 1-deoxy-D-xylulose-5-phosphate (DXP) to 2-C-methyl-D-erythritol 4-phosphate (MEP).</text>
</comment>
<comment type="catalytic activity">
    <reaction evidence="1">
        <text>2-C-methyl-D-erythritol 4-phosphate + NADP(+) = 1-deoxy-D-xylulose 5-phosphate + NADPH + H(+)</text>
        <dbReference type="Rhea" id="RHEA:13717"/>
        <dbReference type="ChEBI" id="CHEBI:15378"/>
        <dbReference type="ChEBI" id="CHEBI:57783"/>
        <dbReference type="ChEBI" id="CHEBI:57792"/>
        <dbReference type="ChEBI" id="CHEBI:58262"/>
        <dbReference type="ChEBI" id="CHEBI:58349"/>
        <dbReference type="EC" id="1.1.1.267"/>
    </reaction>
    <physiologicalReaction direction="right-to-left" evidence="1">
        <dbReference type="Rhea" id="RHEA:13719"/>
    </physiologicalReaction>
</comment>
<comment type="cofactor">
    <cofactor evidence="1">
        <name>Mg(2+)</name>
        <dbReference type="ChEBI" id="CHEBI:18420"/>
    </cofactor>
    <cofactor evidence="1">
        <name>Mn(2+)</name>
        <dbReference type="ChEBI" id="CHEBI:29035"/>
    </cofactor>
</comment>
<comment type="pathway">
    <text evidence="1">Isoprenoid biosynthesis; isopentenyl diphosphate biosynthesis via DXP pathway; isopentenyl diphosphate from 1-deoxy-D-xylulose 5-phosphate: step 1/6.</text>
</comment>
<comment type="similarity">
    <text evidence="1">Belongs to the DXR family.</text>
</comment>
<sequence>MGVVTKKILILGSTGSIGTQALDVIADNSDKFEVVGIAAGGSQPDLVISQAQQLGLAADKVAVADAQAAAVISKALGGEIISGTDAAKILVETTKADTVLNALVGSLGLAATLATLESGAHLALANKESLVAGGEFVTSKAKLGQIIPVDSEHSAMAQCLRSGTRDEVARIVLTASGGPFRGWTREKMWEVTPEQAAAHPTWAMGQMNTLNSATLINKGLELIEATLLFETDADLIDVTVHPQSIIHSMITFTDGATIAQASPPSMKLPIALALDWPHRVPKAQPALDFTAAHTWAFEPVDDAAFPAVQLARHVAKQKGTYPAVYNAANEEAAEAFLRGRIKFPQIVDVVDEVLQGASQFAGVASHVDDILATESEARARANALINRLATNL</sequence>
<organism>
    <name type="scientific">Corynebacterium glutamicum (strain ATCC 13032 / DSM 20300 / JCM 1318 / BCRC 11384 / CCUG 27702 / LMG 3730 / NBRC 12168 / NCIMB 10025 / NRRL B-2784 / 534)</name>
    <dbReference type="NCBI Taxonomy" id="196627"/>
    <lineage>
        <taxon>Bacteria</taxon>
        <taxon>Bacillati</taxon>
        <taxon>Actinomycetota</taxon>
        <taxon>Actinomycetes</taxon>
        <taxon>Mycobacteriales</taxon>
        <taxon>Corynebacteriaceae</taxon>
        <taxon>Corynebacterium</taxon>
    </lineage>
</organism>
<feature type="chain" id="PRO_0000163642" description="1-deoxy-D-xylulose 5-phosphate reductoisomerase">
    <location>
        <begin position="1"/>
        <end position="392"/>
    </location>
</feature>
<feature type="binding site" evidence="1">
    <location>
        <position position="14"/>
    </location>
    <ligand>
        <name>NADPH</name>
        <dbReference type="ChEBI" id="CHEBI:57783"/>
    </ligand>
</feature>
<feature type="binding site" evidence="1">
    <location>
        <position position="15"/>
    </location>
    <ligand>
        <name>NADPH</name>
        <dbReference type="ChEBI" id="CHEBI:57783"/>
    </ligand>
</feature>
<feature type="binding site" evidence="1">
    <location>
        <position position="16"/>
    </location>
    <ligand>
        <name>NADPH</name>
        <dbReference type="ChEBI" id="CHEBI:57783"/>
    </ligand>
</feature>
<feature type="binding site" evidence="1">
    <location>
        <position position="17"/>
    </location>
    <ligand>
        <name>NADPH</name>
        <dbReference type="ChEBI" id="CHEBI:57783"/>
    </ligand>
</feature>
<feature type="binding site" evidence="1">
    <location>
        <position position="40"/>
    </location>
    <ligand>
        <name>NADPH</name>
        <dbReference type="ChEBI" id="CHEBI:57783"/>
    </ligand>
</feature>
<feature type="binding site" evidence="1">
    <location>
        <position position="43"/>
    </location>
    <ligand>
        <name>NADPH</name>
        <dbReference type="ChEBI" id="CHEBI:57783"/>
    </ligand>
</feature>
<feature type="binding site" evidence="1">
    <location>
        <position position="126"/>
    </location>
    <ligand>
        <name>NADPH</name>
        <dbReference type="ChEBI" id="CHEBI:57783"/>
    </ligand>
</feature>
<feature type="binding site" evidence="1">
    <location>
        <position position="127"/>
    </location>
    <ligand>
        <name>1-deoxy-D-xylulose 5-phosphate</name>
        <dbReference type="ChEBI" id="CHEBI:57792"/>
    </ligand>
</feature>
<feature type="binding site" evidence="1">
    <location>
        <position position="128"/>
    </location>
    <ligand>
        <name>NADPH</name>
        <dbReference type="ChEBI" id="CHEBI:57783"/>
    </ligand>
</feature>
<feature type="binding site" evidence="1">
    <location>
        <position position="150"/>
    </location>
    <ligand>
        <name>Mn(2+)</name>
        <dbReference type="ChEBI" id="CHEBI:29035"/>
    </ligand>
</feature>
<feature type="binding site" evidence="1">
    <location>
        <position position="151"/>
    </location>
    <ligand>
        <name>1-deoxy-D-xylulose 5-phosphate</name>
        <dbReference type="ChEBI" id="CHEBI:57792"/>
    </ligand>
</feature>
<feature type="binding site" evidence="1">
    <location>
        <position position="152"/>
    </location>
    <ligand>
        <name>1-deoxy-D-xylulose 5-phosphate</name>
        <dbReference type="ChEBI" id="CHEBI:57792"/>
    </ligand>
</feature>
<feature type="binding site" evidence="1">
    <location>
        <position position="152"/>
    </location>
    <ligand>
        <name>Mn(2+)</name>
        <dbReference type="ChEBI" id="CHEBI:29035"/>
    </ligand>
</feature>
<feature type="binding site" evidence="1">
    <location>
        <position position="176"/>
    </location>
    <ligand>
        <name>1-deoxy-D-xylulose 5-phosphate</name>
        <dbReference type="ChEBI" id="CHEBI:57792"/>
    </ligand>
</feature>
<feature type="binding site" evidence="1">
    <location>
        <position position="199"/>
    </location>
    <ligand>
        <name>1-deoxy-D-xylulose 5-phosphate</name>
        <dbReference type="ChEBI" id="CHEBI:57792"/>
    </ligand>
</feature>
<feature type="binding site" evidence="1">
    <location>
        <position position="205"/>
    </location>
    <ligand>
        <name>NADPH</name>
        <dbReference type="ChEBI" id="CHEBI:57783"/>
    </ligand>
</feature>
<feature type="binding site" evidence="1">
    <location>
        <position position="212"/>
    </location>
    <ligand>
        <name>1-deoxy-D-xylulose 5-phosphate</name>
        <dbReference type="ChEBI" id="CHEBI:57792"/>
    </ligand>
</feature>
<feature type="binding site" evidence="1">
    <location>
        <position position="217"/>
    </location>
    <ligand>
        <name>1-deoxy-D-xylulose 5-phosphate</name>
        <dbReference type="ChEBI" id="CHEBI:57792"/>
    </ligand>
</feature>
<feature type="binding site" evidence="1">
    <location>
        <position position="218"/>
    </location>
    <ligand>
        <name>1-deoxy-D-xylulose 5-phosphate</name>
        <dbReference type="ChEBI" id="CHEBI:57792"/>
    </ligand>
</feature>
<feature type="binding site" evidence="1">
    <location>
        <position position="221"/>
    </location>
    <ligand>
        <name>1-deoxy-D-xylulose 5-phosphate</name>
        <dbReference type="ChEBI" id="CHEBI:57792"/>
    </ligand>
</feature>
<feature type="binding site" evidence="1">
    <location>
        <position position="221"/>
    </location>
    <ligand>
        <name>Mn(2+)</name>
        <dbReference type="ChEBI" id="CHEBI:29035"/>
    </ligand>
</feature>